<proteinExistence type="inferred from homology"/>
<sequence length="429" mass="46003">MHVQSQASSDDFFLQGVGSADPAVAEILAGELKRQQDQIELIASENIVSKAVLDAQGSVLTNKYAEGYPGKRYYGGCEVVDEVERLAIERAKQLFGCEHANVQPHSGSQANQAVFMVTMTPGDTFMGMNLDHGGHLTHGKSVNQSGKWFSPVAYGVRAQDHLIDYDEAYEVAKANNPKVIIAGGSAYSRHIDFKKFREIADEVGAILMCDVAHYAGLIVAGEYPNPFPHAHIVTTTTHKTLRGPRGGMILTNDKKLAKKIDSAVFPGLQGGPLMHVIAAKAVAFGEALKPEFKQYARQVIENARALAESLQSVGFKIVSNGTDSHLMLVDLTPKGVSGADAEIALERAGITTNKNSIPGDPLPPMQTSGLRVGTPAGTTRGFGPGEFRQVGKWIGEVLDAVASGEDPTPVEQKVRGEVLALTKRFPIYS</sequence>
<keyword id="KW-0028">Amino-acid biosynthesis</keyword>
<keyword id="KW-0963">Cytoplasm</keyword>
<keyword id="KW-0554">One-carbon metabolism</keyword>
<keyword id="KW-0663">Pyridoxal phosphate</keyword>
<keyword id="KW-1185">Reference proteome</keyword>
<keyword id="KW-0808">Transferase</keyword>
<reference key="1">
    <citation type="journal article" date="2008" name="BMC Genomics">
        <title>Complete genome of Phenylobacterium zucineum - a novel facultative intracellular bacterium isolated from human erythroleukemia cell line K562.</title>
        <authorList>
            <person name="Luo Y."/>
            <person name="Xu X."/>
            <person name="Ding Z."/>
            <person name="Liu Z."/>
            <person name="Zhang B."/>
            <person name="Yan Z."/>
            <person name="Sun J."/>
            <person name="Hu S."/>
            <person name="Hu X."/>
        </authorList>
    </citation>
    <scope>NUCLEOTIDE SEQUENCE [LARGE SCALE GENOMIC DNA]</scope>
    <source>
        <strain>HLK1</strain>
    </source>
</reference>
<evidence type="ECO:0000255" key="1">
    <source>
        <dbReference type="HAMAP-Rule" id="MF_00051"/>
    </source>
</evidence>
<gene>
    <name evidence="1" type="primary">glyA</name>
    <name type="ordered locus">PHZ_c1675</name>
</gene>
<organism>
    <name type="scientific">Phenylobacterium zucineum (strain HLK1)</name>
    <dbReference type="NCBI Taxonomy" id="450851"/>
    <lineage>
        <taxon>Bacteria</taxon>
        <taxon>Pseudomonadati</taxon>
        <taxon>Pseudomonadota</taxon>
        <taxon>Alphaproteobacteria</taxon>
        <taxon>Caulobacterales</taxon>
        <taxon>Caulobacteraceae</taxon>
        <taxon>Phenylobacterium</taxon>
    </lineage>
</organism>
<comment type="function">
    <text evidence="1">Catalyzes the reversible interconversion of serine and glycine with tetrahydrofolate (THF) serving as the one-carbon carrier. This reaction serves as the major source of one-carbon groups required for the biosynthesis of purines, thymidylate, methionine, and other important biomolecules. Also exhibits THF-independent aldolase activity toward beta-hydroxyamino acids, producing glycine and aldehydes, via a retro-aldol mechanism.</text>
</comment>
<comment type="catalytic activity">
    <reaction evidence="1">
        <text>(6R)-5,10-methylene-5,6,7,8-tetrahydrofolate + glycine + H2O = (6S)-5,6,7,8-tetrahydrofolate + L-serine</text>
        <dbReference type="Rhea" id="RHEA:15481"/>
        <dbReference type="ChEBI" id="CHEBI:15377"/>
        <dbReference type="ChEBI" id="CHEBI:15636"/>
        <dbReference type="ChEBI" id="CHEBI:33384"/>
        <dbReference type="ChEBI" id="CHEBI:57305"/>
        <dbReference type="ChEBI" id="CHEBI:57453"/>
        <dbReference type="EC" id="2.1.2.1"/>
    </reaction>
</comment>
<comment type="cofactor">
    <cofactor evidence="1">
        <name>pyridoxal 5'-phosphate</name>
        <dbReference type="ChEBI" id="CHEBI:597326"/>
    </cofactor>
</comment>
<comment type="pathway">
    <text evidence="1">One-carbon metabolism; tetrahydrofolate interconversion.</text>
</comment>
<comment type="pathway">
    <text evidence="1">Amino-acid biosynthesis; glycine biosynthesis; glycine from L-serine: step 1/1.</text>
</comment>
<comment type="subunit">
    <text evidence="1">Homodimer.</text>
</comment>
<comment type="subcellular location">
    <subcellularLocation>
        <location evidence="1">Cytoplasm</location>
    </subcellularLocation>
</comment>
<comment type="similarity">
    <text evidence="1">Belongs to the SHMT family.</text>
</comment>
<protein>
    <recommendedName>
        <fullName evidence="1">Serine hydroxymethyltransferase</fullName>
        <shortName evidence="1">SHMT</shortName>
        <shortName evidence="1">Serine methylase</shortName>
        <ecNumber evidence="1">2.1.2.1</ecNumber>
    </recommendedName>
</protein>
<accession>B4RB35</accession>
<name>GLYA_PHEZH</name>
<feature type="chain" id="PRO_0000369947" description="Serine hydroxymethyltransferase">
    <location>
        <begin position="1"/>
        <end position="429"/>
    </location>
</feature>
<feature type="binding site" evidence="1">
    <location>
        <position position="130"/>
    </location>
    <ligand>
        <name>(6S)-5,6,7,8-tetrahydrofolate</name>
        <dbReference type="ChEBI" id="CHEBI:57453"/>
    </ligand>
</feature>
<feature type="binding site" evidence="1">
    <location>
        <begin position="134"/>
        <end position="136"/>
    </location>
    <ligand>
        <name>(6S)-5,6,7,8-tetrahydrofolate</name>
        <dbReference type="ChEBI" id="CHEBI:57453"/>
    </ligand>
</feature>
<feature type="site" description="Plays an important role in substrate specificity" evidence="1">
    <location>
        <position position="238"/>
    </location>
</feature>
<feature type="modified residue" description="N6-(pyridoxal phosphate)lysine" evidence="1">
    <location>
        <position position="239"/>
    </location>
</feature>
<dbReference type="EC" id="2.1.2.1" evidence="1"/>
<dbReference type="EMBL" id="CP000747">
    <property type="protein sequence ID" value="ACG78086.1"/>
    <property type="molecule type" value="Genomic_DNA"/>
</dbReference>
<dbReference type="RefSeq" id="WP_012522228.1">
    <property type="nucleotide sequence ID" value="NC_011144.1"/>
</dbReference>
<dbReference type="SMR" id="B4RB35"/>
<dbReference type="STRING" id="450851.PHZ_c1675"/>
<dbReference type="KEGG" id="pzu:PHZ_c1675"/>
<dbReference type="eggNOG" id="COG0112">
    <property type="taxonomic scope" value="Bacteria"/>
</dbReference>
<dbReference type="HOGENOM" id="CLU_022477_2_1_5"/>
<dbReference type="UniPathway" id="UPA00193"/>
<dbReference type="UniPathway" id="UPA00288">
    <property type="reaction ID" value="UER01023"/>
</dbReference>
<dbReference type="Proteomes" id="UP000001868">
    <property type="component" value="Chromosome"/>
</dbReference>
<dbReference type="GO" id="GO:0005829">
    <property type="term" value="C:cytosol"/>
    <property type="evidence" value="ECO:0007669"/>
    <property type="project" value="TreeGrafter"/>
</dbReference>
<dbReference type="GO" id="GO:0004372">
    <property type="term" value="F:glycine hydroxymethyltransferase activity"/>
    <property type="evidence" value="ECO:0007669"/>
    <property type="project" value="UniProtKB-UniRule"/>
</dbReference>
<dbReference type="GO" id="GO:0030170">
    <property type="term" value="F:pyridoxal phosphate binding"/>
    <property type="evidence" value="ECO:0007669"/>
    <property type="project" value="UniProtKB-UniRule"/>
</dbReference>
<dbReference type="GO" id="GO:0019264">
    <property type="term" value="P:glycine biosynthetic process from serine"/>
    <property type="evidence" value="ECO:0007669"/>
    <property type="project" value="UniProtKB-UniRule"/>
</dbReference>
<dbReference type="GO" id="GO:0035999">
    <property type="term" value="P:tetrahydrofolate interconversion"/>
    <property type="evidence" value="ECO:0007669"/>
    <property type="project" value="UniProtKB-UniRule"/>
</dbReference>
<dbReference type="CDD" id="cd00378">
    <property type="entry name" value="SHMT"/>
    <property type="match status" value="1"/>
</dbReference>
<dbReference type="FunFam" id="3.40.640.10:FF:000001">
    <property type="entry name" value="Serine hydroxymethyltransferase"/>
    <property type="match status" value="1"/>
</dbReference>
<dbReference type="Gene3D" id="3.90.1150.10">
    <property type="entry name" value="Aspartate Aminotransferase, domain 1"/>
    <property type="match status" value="1"/>
</dbReference>
<dbReference type="Gene3D" id="3.40.640.10">
    <property type="entry name" value="Type I PLP-dependent aspartate aminotransferase-like (Major domain)"/>
    <property type="match status" value="1"/>
</dbReference>
<dbReference type="HAMAP" id="MF_00051">
    <property type="entry name" value="SHMT"/>
    <property type="match status" value="1"/>
</dbReference>
<dbReference type="InterPro" id="IPR015424">
    <property type="entry name" value="PyrdxlP-dep_Trfase"/>
</dbReference>
<dbReference type="InterPro" id="IPR015421">
    <property type="entry name" value="PyrdxlP-dep_Trfase_major"/>
</dbReference>
<dbReference type="InterPro" id="IPR015422">
    <property type="entry name" value="PyrdxlP-dep_Trfase_small"/>
</dbReference>
<dbReference type="InterPro" id="IPR001085">
    <property type="entry name" value="Ser_HO-MeTrfase"/>
</dbReference>
<dbReference type="InterPro" id="IPR049943">
    <property type="entry name" value="Ser_HO-MeTrfase-like"/>
</dbReference>
<dbReference type="InterPro" id="IPR019798">
    <property type="entry name" value="Ser_HO-MeTrfase_PLP_BS"/>
</dbReference>
<dbReference type="InterPro" id="IPR039429">
    <property type="entry name" value="SHMT-like_dom"/>
</dbReference>
<dbReference type="NCBIfam" id="NF000586">
    <property type="entry name" value="PRK00011.1"/>
    <property type="match status" value="1"/>
</dbReference>
<dbReference type="PANTHER" id="PTHR11680">
    <property type="entry name" value="SERINE HYDROXYMETHYLTRANSFERASE"/>
    <property type="match status" value="1"/>
</dbReference>
<dbReference type="PANTHER" id="PTHR11680:SF35">
    <property type="entry name" value="SERINE HYDROXYMETHYLTRANSFERASE 1"/>
    <property type="match status" value="1"/>
</dbReference>
<dbReference type="Pfam" id="PF00464">
    <property type="entry name" value="SHMT"/>
    <property type="match status" value="1"/>
</dbReference>
<dbReference type="PIRSF" id="PIRSF000412">
    <property type="entry name" value="SHMT"/>
    <property type="match status" value="1"/>
</dbReference>
<dbReference type="SUPFAM" id="SSF53383">
    <property type="entry name" value="PLP-dependent transferases"/>
    <property type="match status" value="1"/>
</dbReference>
<dbReference type="PROSITE" id="PS00096">
    <property type="entry name" value="SHMT"/>
    <property type="match status" value="1"/>
</dbReference>